<evidence type="ECO:0000269" key="1">
    <source>
    </source>
</evidence>
<evidence type="ECO:0000303" key="2">
    <source>
    </source>
</evidence>
<evidence type="ECO:0000305" key="3"/>
<organism>
    <name type="scientific">Nicotiana tabacum</name>
    <name type="common">Common tobacco</name>
    <dbReference type="NCBI Taxonomy" id="4097"/>
    <lineage>
        <taxon>Eukaryota</taxon>
        <taxon>Viridiplantae</taxon>
        <taxon>Streptophyta</taxon>
        <taxon>Embryophyta</taxon>
        <taxon>Tracheophyta</taxon>
        <taxon>Spermatophyta</taxon>
        <taxon>Magnoliopsida</taxon>
        <taxon>eudicotyledons</taxon>
        <taxon>Gunneridae</taxon>
        <taxon>Pentapetalae</taxon>
        <taxon>asterids</taxon>
        <taxon>lamiids</taxon>
        <taxon>Solanales</taxon>
        <taxon>Solanaceae</taxon>
        <taxon>Nicotianoideae</taxon>
        <taxon>Nicotianeae</taxon>
        <taxon>Nicotiana</taxon>
    </lineage>
</organism>
<proteinExistence type="evidence at protein level"/>
<comment type="subcellular location">
    <subcellularLocation>
        <location evidence="1">Secreted</location>
        <location evidence="1">Cell wall</location>
    </subcellularLocation>
</comment>
<keyword id="KW-0134">Cell wall</keyword>
<keyword id="KW-0903">Direct protein sequencing</keyword>
<keyword id="KW-1185">Reference proteome</keyword>
<keyword id="KW-0964">Secreted</keyword>
<dbReference type="PaxDb" id="4097-P80788"/>
<dbReference type="Proteomes" id="UP000084051">
    <property type="component" value="Unplaced"/>
</dbReference>
<dbReference type="GO" id="GO:0005576">
    <property type="term" value="C:extracellular region"/>
    <property type="evidence" value="ECO:0007669"/>
    <property type="project" value="UniProtKB-KW"/>
</dbReference>
<name>CWP11_TOBAC</name>
<accession>P80788</accession>
<reference evidence="3" key="1">
    <citation type="journal article" date="1997" name="J. Biol. Chem.">
        <title>Differential extraction and protein sequencing reveals major differences in patterns of primary cell wall proteins from plants.</title>
        <authorList>
            <person name="Robertson D."/>
            <person name="Mitchell G.P."/>
            <person name="Gilroy J.S."/>
            <person name="Gerrish C."/>
            <person name="Bolwell G.P."/>
            <person name="Slabas A.R."/>
        </authorList>
    </citation>
    <scope>PROTEIN SEQUENCE</scope>
    <scope>SUBCELLULAR LOCATION</scope>
</reference>
<feature type="chain" id="PRO_0000079664" description="47 kDa cell wall protein">
    <location>
        <begin position="1"/>
        <end position="24" status="greater than"/>
    </location>
</feature>
<feature type="non-terminal residue" evidence="2">
    <location>
        <position position="24"/>
    </location>
</feature>
<sequence>ATIEVYNILPYYYYVSKAWSWNGN</sequence>
<protein>
    <recommendedName>
        <fullName>47 kDa cell wall protein</fullName>
    </recommendedName>
</protein>